<reference key="1">
    <citation type="journal article" date="2009" name="Proc. Natl. Acad. Sci. U.S.A.">
        <title>The genomic basis of trophic strategy in marine bacteria.</title>
        <authorList>
            <person name="Lauro F.M."/>
            <person name="McDougald D."/>
            <person name="Thomas T."/>
            <person name="Williams T.J."/>
            <person name="Egan S."/>
            <person name="Rice S."/>
            <person name="DeMaere M.Z."/>
            <person name="Ting L."/>
            <person name="Ertan H."/>
            <person name="Johnson J."/>
            <person name="Ferriera S."/>
            <person name="Lapidus A."/>
            <person name="Anderson I."/>
            <person name="Kyrpides N."/>
            <person name="Munk A.C."/>
            <person name="Detter C."/>
            <person name="Han C.S."/>
            <person name="Brown M.V."/>
            <person name="Robb F.T."/>
            <person name="Kjelleberg S."/>
            <person name="Cavicchioli R."/>
        </authorList>
    </citation>
    <scope>NUCLEOTIDE SEQUENCE [LARGE SCALE GENOMIC DNA]</scope>
    <source>
        <strain>DSM 13593 / LMG 18877 / RB2256</strain>
    </source>
</reference>
<evidence type="ECO:0000255" key="1">
    <source>
        <dbReference type="HAMAP-Rule" id="MF_00340"/>
    </source>
</evidence>
<evidence type="ECO:0000256" key="2">
    <source>
        <dbReference type="SAM" id="MobiDB-lite"/>
    </source>
</evidence>
<evidence type="ECO:0000305" key="3"/>
<dbReference type="EMBL" id="CP000356">
    <property type="protein sequence ID" value="ABF53134.1"/>
    <property type="molecule type" value="Genomic_DNA"/>
</dbReference>
<dbReference type="RefSeq" id="WP_011541714.1">
    <property type="nucleotide sequence ID" value="NC_008048.1"/>
</dbReference>
<dbReference type="SMR" id="Q1GT88"/>
<dbReference type="STRING" id="317655.Sala_1420"/>
<dbReference type="KEGG" id="sal:Sala_1420"/>
<dbReference type="eggNOG" id="COG0333">
    <property type="taxonomic scope" value="Bacteria"/>
</dbReference>
<dbReference type="HOGENOM" id="CLU_129084_1_3_5"/>
<dbReference type="OrthoDB" id="9801927at2"/>
<dbReference type="Proteomes" id="UP000006578">
    <property type="component" value="Chromosome"/>
</dbReference>
<dbReference type="GO" id="GO:0015934">
    <property type="term" value="C:large ribosomal subunit"/>
    <property type="evidence" value="ECO:0007669"/>
    <property type="project" value="InterPro"/>
</dbReference>
<dbReference type="GO" id="GO:0003735">
    <property type="term" value="F:structural constituent of ribosome"/>
    <property type="evidence" value="ECO:0007669"/>
    <property type="project" value="InterPro"/>
</dbReference>
<dbReference type="GO" id="GO:0006412">
    <property type="term" value="P:translation"/>
    <property type="evidence" value="ECO:0007669"/>
    <property type="project" value="UniProtKB-UniRule"/>
</dbReference>
<dbReference type="Gene3D" id="1.20.5.640">
    <property type="entry name" value="Single helix bin"/>
    <property type="match status" value="1"/>
</dbReference>
<dbReference type="HAMAP" id="MF_00340">
    <property type="entry name" value="Ribosomal_bL32"/>
    <property type="match status" value="1"/>
</dbReference>
<dbReference type="InterPro" id="IPR002677">
    <property type="entry name" value="Ribosomal_bL32"/>
</dbReference>
<dbReference type="InterPro" id="IPR044957">
    <property type="entry name" value="Ribosomal_bL32_bact"/>
</dbReference>
<dbReference type="InterPro" id="IPR011332">
    <property type="entry name" value="Ribosomal_zn-bd"/>
</dbReference>
<dbReference type="NCBIfam" id="TIGR01031">
    <property type="entry name" value="rpmF_bact"/>
    <property type="match status" value="1"/>
</dbReference>
<dbReference type="PANTHER" id="PTHR35534">
    <property type="entry name" value="50S RIBOSOMAL PROTEIN L32"/>
    <property type="match status" value="1"/>
</dbReference>
<dbReference type="PANTHER" id="PTHR35534:SF1">
    <property type="entry name" value="LARGE RIBOSOMAL SUBUNIT PROTEIN BL32"/>
    <property type="match status" value="1"/>
</dbReference>
<dbReference type="Pfam" id="PF01783">
    <property type="entry name" value="Ribosomal_L32p"/>
    <property type="match status" value="1"/>
</dbReference>
<dbReference type="SUPFAM" id="SSF57829">
    <property type="entry name" value="Zn-binding ribosomal proteins"/>
    <property type="match status" value="1"/>
</dbReference>
<accession>Q1GT88</accession>
<proteinExistence type="inferred from homology"/>
<sequence length="59" mass="6539">MAVPKRKTSPSKRGMRRSHDSLKVEAFQECPNCGELKRPHNLCNACGHYNGREVVSVGA</sequence>
<organism>
    <name type="scientific">Sphingopyxis alaskensis (strain DSM 13593 / LMG 18877 / RB2256)</name>
    <name type="common">Sphingomonas alaskensis</name>
    <dbReference type="NCBI Taxonomy" id="317655"/>
    <lineage>
        <taxon>Bacteria</taxon>
        <taxon>Pseudomonadati</taxon>
        <taxon>Pseudomonadota</taxon>
        <taxon>Alphaproteobacteria</taxon>
        <taxon>Sphingomonadales</taxon>
        <taxon>Sphingomonadaceae</taxon>
        <taxon>Sphingopyxis</taxon>
    </lineage>
</organism>
<gene>
    <name evidence="1" type="primary">rpmF</name>
    <name type="ordered locus">Sala_1420</name>
</gene>
<name>RL32_SPHAL</name>
<feature type="chain" id="PRO_0000296569" description="Large ribosomal subunit protein bL32">
    <location>
        <begin position="1"/>
        <end position="59"/>
    </location>
</feature>
<feature type="region of interest" description="Disordered" evidence="2">
    <location>
        <begin position="1"/>
        <end position="20"/>
    </location>
</feature>
<feature type="compositionally biased region" description="Basic residues" evidence="2">
    <location>
        <begin position="1"/>
        <end position="16"/>
    </location>
</feature>
<protein>
    <recommendedName>
        <fullName evidence="1">Large ribosomal subunit protein bL32</fullName>
    </recommendedName>
    <alternativeName>
        <fullName evidence="3">50S ribosomal protein L32</fullName>
    </alternativeName>
</protein>
<keyword id="KW-1185">Reference proteome</keyword>
<keyword id="KW-0687">Ribonucleoprotein</keyword>
<keyword id="KW-0689">Ribosomal protein</keyword>
<comment type="similarity">
    <text evidence="1">Belongs to the bacterial ribosomal protein bL32 family.</text>
</comment>